<organism>
    <name type="scientific">Arabidopsis thaliana</name>
    <name type="common">Mouse-ear cress</name>
    <dbReference type="NCBI Taxonomy" id="3702"/>
    <lineage>
        <taxon>Eukaryota</taxon>
        <taxon>Viridiplantae</taxon>
        <taxon>Streptophyta</taxon>
        <taxon>Embryophyta</taxon>
        <taxon>Tracheophyta</taxon>
        <taxon>Spermatophyta</taxon>
        <taxon>Magnoliopsida</taxon>
        <taxon>eudicotyledons</taxon>
        <taxon>Gunneridae</taxon>
        <taxon>Pentapetalae</taxon>
        <taxon>rosids</taxon>
        <taxon>malvids</taxon>
        <taxon>Brassicales</taxon>
        <taxon>Brassicaceae</taxon>
        <taxon>Camelineae</taxon>
        <taxon>Arabidopsis</taxon>
    </lineage>
</organism>
<keyword id="KW-0112">Calmodulin-binding</keyword>
<keyword id="KW-1003">Cell membrane</keyword>
<keyword id="KW-0963">Cytoplasm</keyword>
<keyword id="KW-0206">Cytoskeleton</keyword>
<keyword id="KW-0472">Membrane</keyword>
<keyword id="KW-0539">Nucleus</keyword>
<keyword id="KW-0597">Phosphoprotein</keyword>
<keyword id="KW-1185">Reference proteome</keyword>
<keyword id="KW-0677">Repeat</keyword>
<feature type="chain" id="PRO_0000324124" description="Protein IQ-DOMAIN 31">
    <location>
        <begin position="1"/>
        <end position="587"/>
    </location>
</feature>
<feature type="domain" description="IQ 1" evidence="2">
    <location>
        <begin position="112"/>
        <end position="140"/>
    </location>
</feature>
<feature type="domain" description="IQ 2" evidence="2">
    <location>
        <begin position="141"/>
        <end position="163"/>
    </location>
</feature>
<feature type="domain" description="IQ 3" evidence="2">
    <location>
        <begin position="164"/>
        <end position="188"/>
    </location>
</feature>
<feature type="region of interest" description="Disordered" evidence="4">
    <location>
        <begin position="57"/>
        <end position="80"/>
    </location>
</feature>
<feature type="region of interest" description="Calmodulin-binding" evidence="7">
    <location>
        <begin position="149"/>
        <end position="159"/>
    </location>
</feature>
<feature type="region of interest" description="Disordered" evidence="4">
    <location>
        <begin position="344"/>
        <end position="587"/>
    </location>
</feature>
<feature type="short sequence motif" description="Nuclear localization signal" evidence="3">
    <location>
        <begin position="176"/>
        <end position="183"/>
    </location>
</feature>
<feature type="compositionally biased region" description="Basic and acidic residues" evidence="4">
    <location>
        <begin position="357"/>
        <end position="373"/>
    </location>
</feature>
<feature type="compositionally biased region" description="Basic and acidic residues" evidence="4">
    <location>
        <begin position="390"/>
        <end position="413"/>
    </location>
</feature>
<feature type="compositionally biased region" description="Polar residues" evidence="4">
    <location>
        <begin position="424"/>
        <end position="434"/>
    </location>
</feature>
<feature type="compositionally biased region" description="Basic and acidic residues" evidence="4">
    <location>
        <begin position="435"/>
        <end position="472"/>
    </location>
</feature>
<feature type="compositionally biased region" description="Basic and acidic residues" evidence="4">
    <location>
        <begin position="482"/>
        <end position="494"/>
    </location>
</feature>
<feature type="compositionally biased region" description="Polar residues" evidence="4">
    <location>
        <begin position="495"/>
        <end position="506"/>
    </location>
</feature>
<feature type="compositionally biased region" description="Polar residues" evidence="4">
    <location>
        <begin position="544"/>
        <end position="561"/>
    </location>
</feature>
<feature type="modified residue" description="Phosphoserine" evidence="12 13">
    <location>
        <position position="79"/>
    </location>
</feature>
<protein>
    <recommendedName>
        <fullName evidence="7">Protein IQ-DOMAIN 31</fullName>
        <shortName evidence="7">AtIQD31</shortName>
    </recommendedName>
</protein>
<comment type="function">
    <text evidence="1">May be involved in cooperative interactions with calmodulins or calmodulin-like proteins (By similarity). Recruits calmodulin proteins to microtubules, thus being a potential scaffold in cellular signaling and trafficking (By similarity). May associate with nucleic acids and regulate gene expression at the transcriptional or post-transcriptional level (By similarity).</text>
</comment>
<comment type="subunit">
    <text evidence="1">Binds to multiple calmodulin (CaM) in the presence of Ca(2+) and CaM-like proteins.</text>
</comment>
<comment type="subcellular location">
    <subcellularLocation>
        <location evidence="3">Nucleus</location>
    </subcellularLocation>
    <subcellularLocation>
        <location evidence="6">Nucleus envelope</location>
    </subcellularLocation>
    <subcellularLocation>
        <location evidence="5 6">Cytoplasm</location>
        <location evidence="5 6">Cytoskeleton</location>
    </subcellularLocation>
    <subcellularLocation>
        <location evidence="6">Cell membrane</location>
    </subcellularLocation>
    <text evidence="5">Associates to cortical microtubules (MTs).</text>
</comment>
<comment type="similarity">
    <text evidence="8">Belongs to the IQD family.</text>
</comment>
<comment type="sequence caution" evidence="8">
    <conflict type="erroneous gene model prediction">
        <sequence resource="EMBL-CDS" id="AAD55302"/>
    </conflict>
</comment>
<comment type="sequence caution" evidence="8">
    <conflict type="erroneous gene model prediction">
        <sequence resource="EMBL-CDS" id="AAG52386"/>
    </conflict>
</comment>
<gene>
    <name evidence="7" type="primary">IQD31</name>
    <name evidence="9" type="ordered locus">At1g74690</name>
    <name evidence="11" type="ORF">F1M20.37</name>
    <name evidence="10" type="ORF">F25A4.33</name>
</gene>
<proteinExistence type="evidence at protein level"/>
<reference key="1">
    <citation type="journal article" date="2000" name="Nature">
        <title>Sequence and analysis of chromosome 1 of the plant Arabidopsis thaliana.</title>
        <authorList>
            <person name="Theologis A."/>
            <person name="Ecker J.R."/>
            <person name="Palm C.J."/>
            <person name="Federspiel N.A."/>
            <person name="Kaul S."/>
            <person name="White O."/>
            <person name="Alonso J."/>
            <person name="Altafi H."/>
            <person name="Araujo R."/>
            <person name="Bowman C.L."/>
            <person name="Brooks S.Y."/>
            <person name="Buehler E."/>
            <person name="Chan A."/>
            <person name="Chao Q."/>
            <person name="Chen H."/>
            <person name="Cheuk R.F."/>
            <person name="Chin C.W."/>
            <person name="Chung M.K."/>
            <person name="Conn L."/>
            <person name="Conway A.B."/>
            <person name="Conway A.R."/>
            <person name="Creasy T.H."/>
            <person name="Dewar K."/>
            <person name="Dunn P."/>
            <person name="Etgu P."/>
            <person name="Feldblyum T.V."/>
            <person name="Feng J.-D."/>
            <person name="Fong B."/>
            <person name="Fujii C.Y."/>
            <person name="Gill J.E."/>
            <person name="Goldsmith A.D."/>
            <person name="Haas B."/>
            <person name="Hansen N.F."/>
            <person name="Hughes B."/>
            <person name="Huizar L."/>
            <person name="Hunter J.L."/>
            <person name="Jenkins J."/>
            <person name="Johnson-Hopson C."/>
            <person name="Khan S."/>
            <person name="Khaykin E."/>
            <person name="Kim C.J."/>
            <person name="Koo H.L."/>
            <person name="Kremenetskaia I."/>
            <person name="Kurtz D.B."/>
            <person name="Kwan A."/>
            <person name="Lam B."/>
            <person name="Langin-Hooper S."/>
            <person name="Lee A."/>
            <person name="Lee J.M."/>
            <person name="Lenz C.A."/>
            <person name="Li J.H."/>
            <person name="Li Y.-P."/>
            <person name="Lin X."/>
            <person name="Liu S.X."/>
            <person name="Liu Z.A."/>
            <person name="Luros J.S."/>
            <person name="Maiti R."/>
            <person name="Marziali A."/>
            <person name="Militscher J."/>
            <person name="Miranda M."/>
            <person name="Nguyen M."/>
            <person name="Nierman W.C."/>
            <person name="Osborne B.I."/>
            <person name="Pai G."/>
            <person name="Peterson J."/>
            <person name="Pham P.K."/>
            <person name="Rizzo M."/>
            <person name="Rooney T."/>
            <person name="Rowley D."/>
            <person name="Sakano H."/>
            <person name="Salzberg S.L."/>
            <person name="Schwartz J.R."/>
            <person name="Shinn P."/>
            <person name="Southwick A.M."/>
            <person name="Sun H."/>
            <person name="Tallon L.J."/>
            <person name="Tambunga G."/>
            <person name="Toriumi M.J."/>
            <person name="Town C.D."/>
            <person name="Utterback T."/>
            <person name="Van Aken S."/>
            <person name="Vaysberg M."/>
            <person name="Vysotskaia V.S."/>
            <person name="Walker M."/>
            <person name="Wu D."/>
            <person name="Yu G."/>
            <person name="Fraser C.M."/>
            <person name="Venter J.C."/>
            <person name="Davis R.W."/>
        </authorList>
    </citation>
    <scope>NUCLEOTIDE SEQUENCE [LARGE SCALE GENOMIC DNA]</scope>
    <source>
        <strain>cv. Columbia</strain>
    </source>
</reference>
<reference key="2">
    <citation type="journal article" date="2017" name="Plant J.">
        <title>Araport11: a complete reannotation of the Arabidopsis thaliana reference genome.</title>
        <authorList>
            <person name="Cheng C.Y."/>
            <person name="Krishnakumar V."/>
            <person name="Chan A.P."/>
            <person name="Thibaud-Nissen F."/>
            <person name="Schobel S."/>
            <person name="Town C.D."/>
        </authorList>
    </citation>
    <scope>GENOME REANNOTATION</scope>
    <source>
        <strain>cv. Columbia</strain>
    </source>
</reference>
<reference key="3">
    <citation type="journal article" date="2003" name="Science">
        <title>Empirical analysis of transcriptional activity in the Arabidopsis genome.</title>
        <authorList>
            <person name="Yamada K."/>
            <person name="Lim J."/>
            <person name="Dale J.M."/>
            <person name="Chen H."/>
            <person name="Shinn P."/>
            <person name="Palm C.J."/>
            <person name="Southwick A.M."/>
            <person name="Wu H.C."/>
            <person name="Kim C.J."/>
            <person name="Nguyen M."/>
            <person name="Pham P.K."/>
            <person name="Cheuk R.F."/>
            <person name="Karlin-Newmann G."/>
            <person name="Liu S.X."/>
            <person name="Lam B."/>
            <person name="Sakano H."/>
            <person name="Wu T."/>
            <person name="Yu G."/>
            <person name="Miranda M."/>
            <person name="Quach H.L."/>
            <person name="Tripp M."/>
            <person name="Chang C.H."/>
            <person name="Lee J.M."/>
            <person name="Toriumi M.J."/>
            <person name="Chan M.M."/>
            <person name="Tang C.C."/>
            <person name="Onodera C.S."/>
            <person name="Deng J.M."/>
            <person name="Akiyama K."/>
            <person name="Ansari Y."/>
            <person name="Arakawa T."/>
            <person name="Banh J."/>
            <person name="Banno F."/>
            <person name="Bowser L."/>
            <person name="Brooks S.Y."/>
            <person name="Carninci P."/>
            <person name="Chao Q."/>
            <person name="Choy N."/>
            <person name="Enju A."/>
            <person name="Goldsmith A.D."/>
            <person name="Gurjal M."/>
            <person name="Hansen N.F."/>
            <person name="Hayashizaki Y."/>
            <person name="Johnson-Hopson C."/>
            <person name="Hsuan V.W."/>
            <person name="Iida K."/>
            <person name="Karnes M."/>
            <person name="Khan S."/>
            <person name="Koesema E."/>
            <person name="Ishida J."/>
            <person name="Jiang P.X."/>
            <person name="Jones T."/>
            <person name="Kawai J."/>
            <person name="Kamiya A."/>
            <person name="Meyers C."/>
            <person name="Nakajima M."/>
            <person name="Narusaka M."/>
            <person name="Seki M."/>
            <person name="Sakurai T."/>
            <person name="Satou M."/>
            <person name="Tamse R."/>
            <person name="Vaysberg M."/>
            <person name="Wallender E.K."/>
            <person name="Wong C."/>
            <person name="Yamamura Y."/>
            <person name="Yuan S."/>
            <person name="Shinozaki K."/>
            <person name="Davis R.W."/>
            <person name="Theologis A."/>
            <person name="Ecker J.R."/>
        </authorList>
    </citation>
    <scope>NUCLEOTIDE SEQUENCE [LARGE SCALE MRNA]</scope>
    <source>
        <strain>cv. Columbia</strain>
    </source>
</reference>
<reference key="4">
    <citation type="journal article" date="2005" name="BMC Evol. Biol.">
        <title>Genome-wide comparative analysis of the IQD gene families in Arabidopsis thaliana and Oryza sativa.</title>
        <authorList>
            <person name="Abel S."/>
            <person name="Savchenko T."/>
            <person name="Levy M."/>
        </authorList>
    </citation>
    <scope>INTERACTION WITH CALMODULIN</scope>
    <scope>GENE FAMILY</scope>
    <scope>NOMENCLATURE</scope>
</reference>
<reference key="5">
    <citation type="journal article" date="2008" name="J. Proteome Res.">
        <title>Site-specific phosphorylation profiling of Arabidopsis proteins by mass spectrometry and peptide chip analysis.</title>
        <authorList>
            <person name="de la Fuente van Bentem S."/>
            <person name="Anrather D."/>
            <person name="Dohnal I."/>
            <person name="Roitinger E."/>
            <person name="Csaszar E."/>
            <person name="Joore J."/>
            <person name="Buijnink J."/>
            <person name="Carreri A."/>
            <person name="Forzani C."/>
            <person name="Lorkovic Z.J."/>
            <person name="Barta A."/>
            <person name="Lecourieux D."/>
            <person name="Verhounig A."/>
            <person name="Jonak C."/>
            <person name="Hirt H."/>
        </authorList>
    </citation>
    <scope>PHOSPHORYLATION [LARGE SCALE ANALYSIS] AT SER-79</scope>
    <scope>IDENTIFICATION BY MASS SPECTROMETRY [LARGE SCALE ANALYSIS]</scope>
    <source>
        <tissue>Root</tissue>
    </source>
</reference>
<reference key="6">
    <citation type="journal article" date="2009" name="Plant Physiol.">
        <title>Large-scale Arabidopsis phosphoproteome profiling reveals novel chloroplast kinase substrates and phosphorylation networks.</title>
        <authorList>
            <person name="Reiland S."/>
            <person name="Messerli G."/>
            <person name="Baerenfaller K."/>
            <person name="Gerrits B."/>
            <person name="Endler A."/>
            <person name="Grossmann J."/>
            <person name="Gruissem W."/>
            <person name="Baginsky S."/>
        </authorList>
    </citation>
    <scope>PHOSPHORYLATION [LARGE SCALE ANALYSIS] AT SER-79</scope>
    <scope>IDENTIFICATION BY MASS SPECTROMETRY [LARGE SCALE ANALYSIS]</scope>
</reference>
<reference key="7">
    <citation type="journal article" date="2013" name="Plant Physiol.">
        <title>Purification and characterization of novel microtubule-associated proteins from Arabidopsis cell suspension cultures.</title>
        <authorList>
            <person name="Hamada T."/>
            <person name="Nagasaki-Takeuchi N."/>
            <person name="Kato T."/>
            <person name="Fujiwara M."/>
            <person name="Sonobe S."/>
            <person name="Fukao Y."/>
            <person name="Hashimoto T."/>
        </authorList>
    </citation>
    <scope>SUBCELLULAR LOCATION</scope>
</reference>
<reference key="8">
    <citation type="journal article" date="2017" name="Plant Physiol.">
        <title>The IQD family of calmodulin-binding proteins links calcium signaling to microtubules, membrane subdomains, and the nucleus.</title>
        <authorList>
            <person name="Buerstenbinder K."/>
            <person name="Moeller B."/>
            <person name="Ploetner R."/>
            <person name="Stamm G."/>
            <person name="Hause G."/>
            <person name="Mitra D."/>
            <person name="Abel S."/>
        </authorList>
    </citation>
    <scope>SUBCELLULAR LOCATION</scope>
    <source>
        <strain>cv. Columbia</strain>
    </source>
</reference>
<reference key="9">
    <citation type="journal article" date="2017" name="Plant Signal. Behav.">
        <title>Functions of IQD proteins as hubs in cellular calcium and auxin signaling: A toolbox for shape formation and tissue-specification in plants?</title>
        <authorList>
            <person name="Buerstenbinder K."/>
            <person name="Mitra D."/>
            <person name="Quegwer J."/>
        </authorList>
    </citation>
    <scope>REVIEW</scope>
</reference>
<accession>Q8L4D8</accession>
<accession>Q9CA49</accession>
<accession>Q9SSF5</accession>
<sequence length="587" mass="65200">MGKSTKWLKNVLLGKKTSKSSGSKDKERVVSGKEVLVTSKVEESDVVSDLPSFEVAETNTVDRSGGMLETQNVGPEEISDDEIELPEGKSTDSQNVAPVQDHSLSDAERIQREIAATSVQAAFRGYLARRAFWALKGIIRLQALIRGHLVRRQAVATLFSVMGIVRLQAFARGREIRKSDIGVQVYRKCRLQLLQGNKLANPTDAYLGIKKLTANAFAQKLLASSPKVLPVHAYDTSNPNSNLIWLENWSASCFWKPVPQPKKTISRKPQNRLLVEAESAKPKKSVRKVPASNFESSSVQTSFEFEKPKRSFRKVSSQSIEPPAVEDPQIELEKVKRSLRKVHNPVVESSIQPQRSPRKEVEKPKLGVEKTRESSYPLVHETAEEPVNVCDEKKKQEISEQPEEEVHALEMEVHTPGPLETNEALDSSLVNQIDSNEKAMVEEKPSMEKDTKEEKTPKPNNKENSAGKENQKSRKKGSATSKTEREESNGHHETSPSIPSYMQATKSAKAKLRLQGSPKSAEQDGTEKATVPRRHSLPSPGNGRITSHSPRTTRLANSGDKTGNKKEKPLLSSREGNAKTTPAERKR</sequence>
<name>IQD31_ARATH</name>
<evidence type="ECO:0000250" key="1">
    <source>
        <dbReference type="UniProtKB" id="Q9SF32"/>
    </source>
</evidence>
<evidence type="ECO:0000255" key="2">
    <source>
        <dbReference type="PROSITE-ProRule" id="PRU00116"/>
    </source>
</evidence>
<evidence type="ECO:0000255" key="3">
    <source>
        <dbReference type="PROSITE-ProRule" id="PRU00768"/>
    </source>
</evidence>
<evidence type="ECO:0000256" key="4">
    <source>
        <dbReference type="SAM" id="MobiDB-lite"/>
    </source>
</evidence>
<evidence type="ECO:0000269" key="5">
    <source>
    </source>
</evidence>
<evidence type="ECO:0000269" key="6">
    <source>
    </source>
</evidence>
<evidence type="ECO:0000303" key="7">
    <source>
    </source>
</evidence>
<evidence type="ECO:0000305" key="8"/>
<evidence type="ECO:0000312" key="9">
    <source>
        <dbReference type="Araport" id="AT1G74690"/>
    </source>
</evidence>
<evidence type="ECO:0000312" key="10">
    <source>
        <dbReference type="EMBL" id="AAD55302.1"/>
    </source>
</evidence>
<evidence type="ECO:0000312" key="11">
    <source>
        <dbReference type="EMBL" id="AAG52386.1"/>
    </source>
</evidence>
<evidence type="ECO:0007744" key="12">
    <source>
    </source>
</evidence>
<evidence type="ECO:0007744" key="13">
    <source>
    </source>
</evidence>
<dbReference type="EMBL" id="AC008263">
    <property type="protein sequence ID" value="AAD55302.1"/>
    <property type="status" value="ALT_SEQ"/>
    <property type="molecule type" value="Genomic_DNA"/>
</dbReference>
<dbReference type="EMBL" id="AC011765">
    <property type="protein sequence ID" value="AAG52386.1"/>
    <property type="status" value="ALT_SEQ"/>
    <property type="molecule type" value="Genomic_DNA"/>
</dbReference>
<dbReference type="EMBL" id="CP002684">
    <property type="protein sequence ID" value="AEE35622.1"/>
    <property type="molecule type" value="Genomic_DNA"/>
</dbReference>
<dbReference type="EMBL" id="AY099679">
    <property type="protein sequence ID" value="AAM20530.1"/>
    <property type="molecule type" value="mRNA"/>
</dbReference>
<dbReference type="EMBL" id="AY128860">
    <property type="protein sequence ID" value="AAM91260.1"/>
    <property type="molecule type" value="mRNA"/>
</dbReference>
<dbReference type="PIR" id="B96776">
    <property type="entry name" value="B96776"/>
</dbReference>
<dbReference type="RefSeq" id="NP_177607.2">
    <property type="nucleotide sequence ID" value="NM_106127.5"/>
</dbReference>
<dbReference type="SMR" id="Q8L4D8"/>
<dbReference type="BioGRID" id="29027">
    <property type="interactions" value="2"/>
</dbReference>
<dbReference type="FunCoup" id="Q8L4D8">
    <property type="interactions" value="1750"/>
</dbReference>
<dbReference type="IntAct" id="Q8L4D8">
    <property type="interactions" value="2"/>
</dbReference>
<dbReference type="STRING" id="3702.Q8L4D8"/>
<dbReference type="iPTMnet" id="Q8L4D8"/>
<dbReference type="PaxDb" id="3702-AT1G74690.1"/>
<dbReference type="ProteomicsDB" id="228834"/>
<dbReference type="EnsemblPlants" id="AT1G74690.1">
    <property type="protein sequence ID" value="AT1G74690.1"/>
    <property type="gene ID" value="AT1G74690"/>
</dbReference>
<dbReference type="GeneID" id="843808"/>
<dbReference type="Gramene" id="AT1G74690.1">
    <property type="protein sequence ID" value="AT1G74690.1"/>
    <property type="gene ID" value="AT1G74690"/>
</dbReference>
<dbReference type="KEGG" id="ath:AT1G74690"/>
<dbReference type="Araport" id="AT1G74690"/>
<dbReference type="TAIR" id="AT1G74690">
    <property type="gene designation" value="IQD31"/>
</dbReference>
<dbReference type="eggNOG" id="ENOG502QTUQ">
    <property type="taxonomic scope" value="Eukaryota"/>
</dbReference>
<dbReference type="HOGENOM" id="CLU_026881_0_0_1"/>
<dbReference type="InParanoid" id="Q8L4D8"/>
<dbReference type="OMA" id="STKTEYP"/>
<dbReference type="PhylomeDB" id="Q8L4D8"/>
<dbReference type="PRO" id="PR:Q8L4D8"/>
<dbReference type="Proteomes" id="UP000006548">
    <property type="component" value="Chromosome 1"/>
</dbReference>
<dbReference type="ExpressionAtlas" id="Q8L4D8">
    <property type="expression patterns" value="baseline and differential"/>
</dbReference>
<dbReference type="GO" id="GO:0005875">
    <property type="term" value="C:microtubule associated complex"/>
    <property type="evidence" value="ECO:0000314"/>
    <property type="project" value="TAIR"/>
</dbReference>
<dbReference type="GO" id="GO:0005739">
    <property type="term" value="C:mitochondrion"/>
    <property type="evidence" value="ECO:0007005"/>
    <property type="project" value="TAIR"/>
</dbReference>
<dbReference type="GO" id="GO:0005635">
    <property type="term" value="C:nuclear envelope"/>
    <property type="evidence" value="ECO:0007669"/>
    <property type="project" value="UniProtKB-SubCell"/>
</dbReference>
<dbReference type="GO" id="GO:0005886">
    <property type="term" value="C:plasma membrane"/>
    <property type="evidence" value="ECO:0007669"/>
    <property type="project" value="UniProtKB-SubCell"/>
</dbReference>
<dbReference type="GO" id="GO:0005516">
    <property type="term" value="F:calmodulin binding"/>
    <property type="evidence" value="ECO:0007669"/>
    <property type="project" value="UniProtKB-KW"/>
</dbReference>
<dbReference type="CDD" id="cd23767">
    <property type="entry name" value="IQCD"/>
    <property type="match status" value="1"/>
</dbReference>
<dbReference type="Gene3D" id="1.20.5.190">
    <property type="match status" value="1"/>
</dbReference>
<dbReference type="InterPro" id="IPR025064">
    <property type="entry name" value="DUF4005"/>
</dbReference>
<dbReference type="InterPro" id="IPR000048">
    <property type="entry name" value="IQ_motif_EF-hand-BS"/>
</dbReference>
<dbReference type="PANTHER" id="PTHR32295">
    <property type="entry name" value="IQ-DOMAIN 5-RELATED"/>
    <property type="match status" value="1"/>
</dbReference>
<dbReference type="PANTHER" id="PTHR32295:SF281">
    <property type="entry name" value="PROTEIN IQ-DOMAIN 31"/>
    <property type="match status" value="1"/>
</dbReference>
<dbReference type="Pfam" id="PF13178">
    <property type="entry name" value="DUF4005"/>
    <property type="match status" value="1"/>
</dbReference>
<dbReference type="Pfam" id="PF00612">
    <property type="entry name" value="IQ"/>
    <property type="match status" value="2"/>
</dbReference>
<dbReference type="SMART" id="SM00015">
    <property type="entry name" value="IQ"/>
    <property type="match status" value="2"/>
</dbReference>
<dbReference type="PROSITE" id="PS50096">
    <property type="entry name" value="IQ"/>
    <property type="match status" value="2"/>
</dbReference>